<accession>Q0AES7</accession>
<dbReference type="EC" id="3.5.4.13" evidence="1"/>
<dbReference type="EMBL" id="CP000450">
    <property type="protein sequence ID" value="ABI60155.1"/>
    <property type="molecule type" value="Genomic_DNA"/>
</dbReference>
<dbReference type="RefSeq" id="WP_011634957.1">
    <property type="nucleotide sequence ID" value="NC_008344.1"/>
</dbReference>
<dbReference type="SMR" id="Q0AES7"/>
<dbReference type="STRING" id="335283.Neut_1923"/>
<dbReference type="KEGG" id="net:Neut_1923"/>
<dbReference type="eggNOG" id="COG0717">
    <property type="taxonomic scope" value="Bacteria"/>
</dbReference>
<dbReference type="HOGENOM" id="CLU_087476_4_0_4"/>
<dbReference type="OrthoDB" id="9780956at2"/>
<dbReference type="UniPathway" id="UPA00610">
    <property type="reaction ID" value="UER00665"/>
</dbReference>
<dbReference type="Proteomes" id="UP000001966">
    <property type="component" value="Chromosome"/>
</dbReference>
<dbReference type="GO" id="GO:0008829">
    <property type="term" value="F:dCTP deaminase activity"/>
    <property type="evidence" value="ECO:0007669"/>
    <property type="project" value="UniProtKB-UniRule"/>
</dbReference>
<dbReference type="GO" id="GO:0000166">
    <property type="term" value="F:nucleotide binding"/>
    <property type="evidence" value="ECO:0007669"/>
    <property type="project" value="UniProtKB-KW"/>
</dbReference>
<dbReference type="GO" id="GO:0006226">
    <property type="term" value="P:dUMP biosynthetic process"/>
    <property type="evidence" value="ECO:0007669"/>
    <property type="project" value="UniProtKB-UniPathway"/>
</dbReference>
<dbReference type="GO" id="GO:0006229">
    <property type="term" value="P:dUTP biosynthetic process"/>
    <property type="evidence" value="ECO:0007669"/>
    <property type="project" value="UniProtKB-UniRule"/>
</dbReference>
<dbReference type="GO" id="GO:0015949">
    <property type="term" value="P:nucleobase-containing small molecule interconversion"/>
    <property type="evidence" value="ECO:0007669"/>
    <property type="project" value="TreeGrafter"/>
</dbReference>
<dbReference type="CDD" id="cd07557">
    <property type="entry name" value="trimeric_dUTPase"/>
    <property type="match status" value="1"/>
</dbReference>
<dbReference type="FunFam" id="2.70.40.10:FF:000001">
    <property type="entry name" value="dCTP deaminase"/>
    <property type="match status" value="1"/>
</dbReference>
<dbReference type="Gene3D" id="2.70.40.10">
    <property type="match status" value="1"/>
</dbReference>
<dbReference type="HAMAP" id="MF_00146">
    <property type="entry name" value="dCTP_deaminase"/>
    <property type="match status" value="1"/>
</dbReference>
<dbReference type="InterPro" id="IPR011962">
    <property type="entry name" value="dCTP_deaminase"/>
</dbReference>
<dbReference type="InterPro" id="IPR036157">
    <property type="entry name" value="dUTPase-like_sf"/>
</dbReference>
<dbReference type="InterPro" id="IPR033704">
    <property type="entry name" value="dUTPase_trimeric"/>
</dbReference>
<dbReference type="NCBIfam" id="TIGR02274">
    <property type="entry name" value="dCTP_deam"/>
    <property type="match status" value="1"/>
</dbReference>
<dbReference type="PANTHER" id="PTHR42680">
    <property type="entry name" value="DCTP DEAMINASE"/>
    <property type="match status" value="1"/>
</dbReference>
<dbReference type="PANTHER" id="PTHR42680:SF3">
    <property type="entry name" value="DCTP DEAMINASE"/>
    <property type="match status" value="1"/>
</dbReference>
<dbReference type="Pfam" id="PF22769">
    <property type="entry name" value="DCD"/>
    <property type="match status" value="1"/>
</dbReference>
<dbReference type="SUPFAM" id="SSF51283">
    <property type="entry name" value="dUTPase-like"/>
    <property type="match status" value="1"/>
</dbReference>
<name>DCD_NITEC</name>
<sequence>MSIKSDKWIRRMAAEYGMIEPFEPGQVKQKDGHSIVSYGTSSYGYDIRCSDEFKLFTNLNSTIVDPKRFDSNSFVDLKNDICIIPPNSFALARTVEYFRIPRNVLTICLGKSTYARCGIIVNVTPFEPEWEGYVTLEFSNTTPLPAKIYANEGVAQVIFFEADEVCETSYKDRKGKYQFQQGVTLPKI</sequence>
<gene>
    <name evidence="1" type="primary">dcd</name>
    <name type="ordered locus">Neut_1923</name>
</gene>
<reference key="1">
    <citation type="journal article" date="2007" name="Environ. Microbiol.">
        <title>Whole-genome analysis of the ammonia-oxidizing bacterium, Nitrosomonas eutropha C91: implications for niche adaptation.</title>
        <authorList>
            <person name="Stein L.Y."/>
            <person name="Arp D.J."/>
            <person name="Berube P.M."/>
            <person name="Chain P.S."/>
            <person name="Hauser L."/>
            <person name="Jetten M.S."/>
            <person name="Klotz M.G."/>
            <person name="Larimer F.W."/>
            <person name="Norton J.M."/>
            <person name="Op den Camp H.J.M."/>
            <person name="Shin M."/>
            <person name="Wei X."/>
        </authorList>
    </citation>
    <scope>NUCLEOTIDE SEQUENCE [LARGE SCALE GENOMIC DNA]</scope>
    <source>
        <strain>DSM 101675 / C91 / Nm57</strain>
    </source>
</reference>
<comment type="function">
    <text evidence="1">Catalyzes the deamination of dCTP to dUTP.</text>
</comment>
<comment type="catalytic activity">
    <reaction evidence="1">
        <text>dCTP + H2O + H(+) = dUTP + NH4(+)</text>
        <dbReference type="Rhea" id="RHEA:22680"/>
        <dbReference type="ChEBI" id="CHEBI:15377"/>
        <dbReference type="ChEBI" id="CHEBI:15378"/>
        <dbReference type="ChEBI" id="CHEBI:28938"/>
        <dbReference type="ChEBI" id="CHEBI:61481"/>
        <dbReference type="ChEBI" id="CHEBI:61555"/>
        <dbReference type="EC" id="3.5.4.13"/>
    </reaction>
</comment>
<comment type="pathway">
    <text evidence="1">Pyrimidine metabolism; dUMP biosynthesis; dUMP from dCTP (dUTP route): step 1/2.</text>
</comment>
<comment type="subunit">
    <text evidence="1">Homotrimer.</text>
</comment>
<comment type="similarity">
    <text evidence="1">Belongs to the dCTP deaminase family.</text>
</comment>
<evidence type="ECO:0000255" key="1">
    <source>
        <dbReference type="HAMAP-Rule" id="MF_00146"/>
    </source>
</evidence>
<proteinExistence type="inferred from homology"/>
<keyword id="KW-0378">Hydrolase</keyword>
<keyword id="KW-0546">Nucleotide metabolism</keyword>
<keyword id="KW-0547">Nucleotide-binding</keyword>
<feature type="chain" id="PRO_1000009770" description="dCTP deaminase">
    <location>
        <begin position="1"/>
        <end position="188"/>
    </location>
</feature>
<feature type="active site" description="Proton donor/acceptor" evidence="1">
    <location>
        <position position="137"/>
    </location>
</feature>
<feature type="binding site" evidence="1">
    <location>
        <begin position="111"/>
        <end position="116"/>
    </location>
    <ligand>
        <name>dCTP</name>
        <dbReference type="ChEBI" id="CHEBI:61481"/>
    </ligand>
</feature>
<feature type="binding site" evidence="1">
    <location>
        <begin position="135"/>
        <end position="137"/>
    </location>
    <ligand>
        <name>dCTP</name>
        <dbReference type="ChEBI" id="CHEBI:61481"/>
    </ligand>
</feature>
<feature type="binding site" evidence="1">
    <location>
        <position position="156"/>
    </location>
    <ligand>
        <name>dCTP</name>
        <dbReference type="ChEBI" id="CHEBI:61481"/>
    </ligand>
</feature>
<feature type="binding site" evidence="1">
    <location>
        <position position="170"/>
    </location>
    <ligand>
        <name>dCTP</name>
        <dbReference type="ChEBI" id="CHEBI:61481"/>
    </ligand>
</feature>
<feature type="binding site" evidence="1">
    <location>
        <position position="180"/>
    </location>
    <ligand>
        <name>dCTP</name>
        <dbReference type="ChEBI" id="CHEBI:61481"/>
    </ligand>
</feature>
<organism>
    <name type="scientific">Nitrosomonas eutropha (strain DSM 101675 / C91 / Nm57)</name>
    <dbReference type="NCBI Taxonomy" id="335283"/>
    <lineage>
        <taxon>Bacteria</taxon>
        <taxon>Pseudomonadati</taxon>
        <taxon>Pseudomonadota</taxon>
        <taxon>Betaproteobacteria</taxon>
        <taxon>Nitrosomonadales</taxon>
        <taxon>Nitrosomonadaceae</taxon>
        <taxon>Nitrosomonas</taxon>
    </lineage>
</organism>
<protein>
    <recommendedName>
        <fullName evidence="1">dCTP deaminase</fullName>
        <ecNumber evidence="1">3.5.4.13</ecNumber>
    </recommendedName>
    <alternativeName>
        <fullName evidence="1">Deoxycytidine triphosphate deaminase</fullName>
    </alternativeName>
</protein>